<organism>
    <name type="scientific">Homo sapiens</name>
    <name type="common">Human</name>
    <dbReference type="NCBI Taxonomy" id="9606"/>
    <lineage>
        <taxon>Eukaryota</taxon>
        <taxon>Metazoa</taxon>
        <taxon>Chordata</taxon>
        <taxon>Craniata</taxon>
        <taxon>Vertebrata</taxon>
        <taxon>Euteleostomi</taxon>
        <taxon>Mammalia</taxon>
        <taxon>Eutheria</taxon>
        <taxon>Euarchontoglires</taxon>
        <taxon>Primates</taxon>
        <taxon>Haplorrhini</taxon>
        <taxon>Catarrhini</taxon>
        <taxon>Hominidae</taxon>
        <taxon>Homo</taxon>
    </lineage>
</organism>
<proteinExistence type="evidence at protein level"/>
<comment type="function">
    <text evidence="1">Probable zinc metalloprotease.</text>
</comment>
<comment type="cofactor">
    <cofactor evidence="1">
        <name>Zn(2+)</name>
        <dbReference type="ChEBI" id="CHEBI:29105"/>
    </cofactor>
    <text evidence="1">Binds 2 Zn(2+) ions per subunit. One is catalytic, whereas the other seems to have a structural role.</text>
</comment>
<comment type="alternative products">
    <event type="alternative splicing"/>
    <isoform>
        <id>Q86W34-4</id>
        <name>1</name>
        <sequence type="displayed"/>
    </isoform>
    <isoform>
        <id>Q86W34-5</id>
        <name>2</name>
        <sequence type="described" ref="VSP_047263"/>
    </isoform>
</comment>
<comment type="tissue specificity">
    <text evidence="8">Down-regulated in testis from patients with maturation arrest (MA) or Sertoli cell-only syndrome (SCOS).</text>
</comment>
<comment type="similarity">
    <text evidence="9">Belongs to the peptidase M54 family.</text>
</comment>
<comment type="caution">
    <text evidence="6 10">An article reported the identification and characterization of this protein as zinc metalloprotease in different tissues; however, this paper was later retracted.</text>
</comment>
<comment type="sequence caution" evidence="9">
    <conflict type="erroneous termination">
        <sequence resource="EMBL-CDS" id="AAF64270"/>
    </conflict>
    <text>Truncated C-terminus.</text>
</comment>
<comment type="sequence caution" evidence="9">
    <conflict type="frameshift">
        <sequence resource="EMBL-CDS" id="AAF64270"/>
    </conflict>
</comment>
<evidence type="ECO:0000250" key="1">
    <source>
        <dbReference type="UniProtKB" id="Q8TXW1"/>
    </source>
</evidence>
<evidence type="ECO:0000255" key="2">
    <source>
        <dbReference type="PROSITE-ProRule" id="PRU10095"/>
    </source>
</evidence>
<evidence type="ECO:0000269" key="3">
    <source>
    </source>
</evidence>
<evidence type="ECO:0000269" key="4">
    <source>
    </source>
</evidence>
<evidence type="ECO:0000269" key="5">
    <source>
    </source>
</evidence>
<evidence type="ECO:0000269" key="6">
    <source>
    </source>
</evidence>
<evidence type="ECO:0000269" key="7">
    <source>
    </source>
</evidence>
<evidence type="ECO:0000269" key="8">
    <source>
    </source>
</evidence>
<evidence type="ECO:0000305" key="9"/>
<evidence type="ECO:0000305" key="10">
    <source>
    </source>
</evidence>
<sequence length="360" mass="41263">MQIIRHSEQTLKTALISKNPVLVSQYEKLNAGEQRLMNEAFQPASDLFGPITLHSPSDWITSHPEAPQDFEQFFSDPYRKTPSPNKRSIYIQSIGSLGNTRIISEEYIKWLTGYCKAYFYGLRVKLLEPVPVSVTRCSFRVNENTHNLQIHAGDILKFLKKKKPEDAFCVVGITMIDLYPRDSWNFVFGQASLTDGVGIFSFARYGSDFYSMHYKGKVKKLKKTSSSDYSIFDNYYIPEITSVLLLRSCKTLTHEIGHIFGLRHCQWLACLMQGSNHLEEADRRPLNLCPICLHKLQCAVGFSIVERYKALVRWIDDESSDTPGATPEHSHEDNGNLPKPVEAFKEWKEWIIKCLAVLQK</sequence>
<feature type="chain" id="PRO_0000159617" description="Archaemetzincin-2">
    <location>
        <begin position="1"/>
        <end position="360"/>
    </location>
</feature>
<feature type="active site" description="Proton acceptor" evidence="2">
    <location>
        <position position="255"/>
    </location>
</feature>
<feature type="binding site" evidence="1">
    <location>
        <position position="254"/>
    </location>
    <ligand>
        <name>Zn(2+)</name>
        <dbReference type="ChEBI" id="CHEBI:29105"/>
        <label>1</label>
        <note>catalytic</note>
    </ligand>
</feature>
<feature type="binding site" evidence="1">
    <location>
        <position position="258"/>
    </location>
    <ligand>
        <name>Zn(2+)</name>
        <dbReference type="ChEBI" id="CHEBI:29105"/>
        <label>1</label>
        <note>catalytic</note>
    </ligand>
</feature>
<feature type="binding site" evidence="1">
    <location>
        <position position="264"/>
    </location>
    <ligand>
        <name>Zn(2+)</name>
        <dbReference type="ChEBI" id="CHEBI:29105"/>
        <label>1</label>
        <note>catalytic</note>
    </ligand>
</feature>
<feature type="binding site" evidence="1">
    <location>
        <position position="265"/>
    </location>
    <ligand>
        <name>Zn(2+)</name>
        <dbReference type="ChEBI" id="CHEBI:29105"/>
        <label>2</label>
    </ligand>
</feature>
<feature type="binding site" evidence="1">
    <location>
        <position position="270"/>
    </location>
    <ligand>
        <name>Zn(2+)</name>
        <dbReference type="ChEBI" id="CHEBI:29105"/>
        <label>2</label>
    </ligand>
</feature>
<feature type="binding site" evidence="1">
    <location>
        <position position="289"/>
    </location>
    <ligand>
        <name>Zn(2+)</name>
        <dbReference type="ChEBI" id="CHEBI:29105"/>
        <label>2</label>
    </ligand>
</feature>
<feature type="binding site" evidence="1">
    <location>
        <position position="292"/>
    </location>
    <ligand>
        <name>Zn(2+)</name>
        <dbReference type="ChEBI" id="CHEBI:29105"/>
        <label>2</label>
    </ligand>
</feature>
<feature type="splice variant" id="VSP_047263" description="In isoform 2." evidence="9">
    <location>
        <begin position="96"/>
        <end position="153"/>
    </location>
</feature>
<feature type="sequence variant" id="VAR_024850" description="In dbSNP:rs3213690." evidence="3 4 5 7">
    <original>N</original>
    <variation>D</variation>
    <location>
        <position position="30"/>
    </location>
</feature>
<feature type="sequence variant" id="VAR_047343" description="In dbSNP:rs3207194.">
    <original>H</original>
    <variation>Q</variation>
    <location>
        <position position="146"/>
    </location>
</feature>
<feature type="sequence conflict" description="In Ref. 3; AAF64270." evidence="9" ref="3">
    <original>I</original>
    <variation>V</variation>
    <location>
        <position position="4"/>
    </location>
</feature>
<feature type="sequence conflict" description="In Ref. 3; AAF64270." evidence="9" ref="3">
    <original>H</original>
    <variation>Y</variation>
    <location>
        <position position="6"/>
    </location>
</feature>
<feature type="sequence conflict" description="In Ref. 3; AAF64270." evidence="9" ref="3">
    <original>T</original>
    <variation>I</variation>
    <location>
        <position position="13"/>
    </location>
</feature>
<feature type="sequence conflict" description="In Ref. 3; AAF64270." evidence="9" ref="3">
    <original>L</original>
    <variation>V</variation>
    <location>
        <position position="15"/>
    </location>
</feature>
<feature type="sequence conflict" description="In Ref. 3; AAF64270." evidence="9" ref="3">
    <original>L</original>
    <variation>V</variation>
    <location>
        <position position="29"/>
    </location>
</feature>
<feature type="sequence conflict" description="In Ref. 3; AAF64270." evidence="9" ref="3">
    <original>IT</original>
    <variation>CI</variation>
    <location>
        <begin position="51"/>
        <end position="52"/>
    </location>
</feature>
<feature type="sequence conflict" description="In Ref. 3; AAF64270." evidence="9" ref="3">
    <original>D</original>
    <variation>H</variation>
    <location>
        <position position="76"/>
    </location>
</feature>
<feature type="sequence conflict" description="In Ref. 3; AAF64270." evidence="9" ref="3">
    <original>T</original>
    <variation>I</variation>
    <location>
        <position position="81"/>
    </location>
</feature>
<feature type="sequence conflict" description="In Ref. 3; AAF64270." evidence="9" ref="3">
    <original>N</original>
    <variation>D</variation>
    <location>
        <position position="85"/>
    </location>
</feature>
<feature type="sequence conflict" description="In Ref. 3; AAF64270." evidence="9" ref="3">
    <original>Q</original>
    <variation>R</variation>
    <location>
        <position position="92"/>
    </location>
</feature>
<feature type="sequence conflict" description="In Ref. 3; AAF64270." evidence="9" ref="3">
    <original>N</original>
    <variation>S</variation>
    <location>
        <position position="99"/>
    </location>
</feature>
<feature type="sequence conflict" description="In Ref. 3; AAF64270." evidence="9" ref="3">
    <original>G</original>
    <variation>R</variation>
    <location>
        <position position="121"/>
    </location>
</feature>
<feature type="sequence conflict" description="In Ref. 3; AAF64270." evidence="9" ref="3">
    <original>S</original>
    <variation>G</variation>
    <location>
        <position position="207"/>
    </location>
</feature>
<gene>
    <name type="primary">AMZ2</name>
    <name type="ORF">BM-014</name>
</gene>
<protein>
    <recommendedName>
        <fullName>Archaemetzincin-2</fullName>
        <ecNumber evidence="1">3.4.-.-</ecNumber>
    </recommendedName>
    <alternativeName>
        <fullName>Archeobacterial metalloproteinase-like protein 2</fullName>
    </alternativeName>
</protein>
<keyword id="KW-0025">Alternative splicing</keyword>
<keyword id="KW-0378">Hydrolase</keyword>
<keyword id="KW-0479">Metal-binding</keyword>
<keyword id="KW-0482">Metalloprotease</keyword>
<keyword id="KW-0645">Protease</keyword>
<keyword id="KW-1267">Proteomics identification</keyword>
<keyword id="KW-1185">Reference proteome</keyword>
<keyword id="KW-0862">Zinc</keyword>
<name>AMZ2_HUMAN</name>
<accession>Q86W34</accession>
<accession>A6NLD9</accession>
<accession>B3KR44</accession>
<accession>Q5XKF1</accession>
<accession>Q9NZE2</accession>
<reference key="1">
    <citation type="journal article" date="2005" name="J. Biol. Chem.">
        <title>Identification and characterization of human archaemetzincin-1 and - 2, two novel members of a family of metalloproteases widely distributed in Archaea.</title>
        <authorList>
            <person name="Diaz-Perales A."/>
            <person name="Quesada V."/>
            <person name="Peinado J.R."/>
            <person name="Ugalde A.P."/>
            <person name="Alvarez J."/>
            <person name="Suarez M.F."/>
            <person name="Gomis-Rueth X."/>
            <person name="Lopez-Otin C."/>
        </authorList>
    </citation>
    <scope>RETRACTED PAPER</scope>
</reference>
<reference key="2">
    <citation type="journal article" date="2019" name="J. Biol. Chem.">
        <authorList>
            <person name="Diaz-Perales A."/>
            <person name="Quesada V."/>
            <person name="Peinado J.R."/>
            <person name="Ugalde A.P."/>
            <person name="Alvarez J."/>
            <person name="Suarez M.F."/>
            <person name="Gomis-Rueth F.X."/>
            <person name="Lopez-Otin C."/>
        </authorList>
    </citation>
    <scope>RETRACTION NOTICE OF PUBMED:15972818</scope>
</reference>
<reference key="3">
    <citation type="journal article" date="2000" name="Genome Res.">
        <title>Cloning and functional analysis of cDNAs with open reading frames for 300 previously undefined genes expressed in CD34+ hematopoietic stem/progenitor cells.</title>
        <authorList>
            <person name="Zhang Q.-H."/>
            <person name="Ye M."/>
            <person name="Wu X.-Y."/>
            <person name="Ren S.-X."/>
            <person name="Zhao M."/>
            <person name="Zhao C.-J."/>
            <person name="Fu G."/>
            <person name="Shen Y."/>
            <person name="Fan H.-Y."/>
            <person name="Lu G."/>
            <person name="Zhong M."/>
            <person name="Xu X.-R."/>
            <person name="Han Z.-G."/>
            <person name="Zhang J.-W."/>
            <person name="Tao J."/>
            <person name="Huang Q.-H."/>
            <person name="Zhou J."/>
            <person name="Hu G.-X."/>
            <person name="Gu J."/>
            <person name="Chen S.-J."/>
            <person name="Chen Z."/>
        </authorList>
    </citation>
    <scope>NUCLEOTIDE SEQUENCE [LARGE SCALE MRNA] (ISOFORM 1)</scope>
    <scope>VARIANT ASP-30</scope>
    <source>
        <tissue>Umbilical cord blood</tissue>
    </source>
</reference>
<reference key="4">
    <citation type="journal article" date="2004" name="Nat. Genet.">
        <title>Complete sequencing and characterization of 21,243 full-length human cDNAs.</title>
        <authorList>
            <person name="Ota T."/>
            <person name="Suzuki Y."/>
            <person name="Nishikawa T."/>
            <person name="Otsuki T."/>
            <person name="Sugiyama T."/>
            <person name="Irie R."/>
            <person name="Wakamatsu A."/>
            <person name="Hayashi K."/>
            <person name="Sato H."/>
            <person name="Nagai K."/>
            <person name="Kimura K."/>
            <person name="Makita H."/>
            <person name="Sekine M."/>
            <person name="Obayashi M."/>
            <person name="Nishi T."/>
            <person name="Shibahara T."/>
            <person name="Tanaka T."/>
            <person name="Ishii S."/>
            <person name="Yamamoto J."/>
            <person name="Saito K."/>
            <person name="Kawai Y."/>
            <person name="Isono Y."/>
            <person name="Nakamura Y."/>
            <person name="Nagahari K."/>
            <person name="Murakami K."/>
            <person name="Yasuda T."/>
            <person name="Iwayanagi T."/>
            <person name="Wagatsuma M."/>
            <person name="Shiratori A."/>
            <person name="Sudo H."/>
            <person name="Hosoiri T."/>
            <person name="Kaku Y."/>
            <person name="Kodaira H."/>
            <person name="Kondo H."/>
            <person name="Sugawara M."/>
            <person name="Takahashi M."/>
            <person name="Kanda K."/>
            <person name="Yokoi T."/>
            <person name="Furuya T."/>
            <person name="Kikkawa E."/>
            <person name="Omura Y."/>
            <person name="Abe K."/>
            <person name="Kamihara K."/>
            <person name="Katsuta N."/>
            <person name="Sato K."/>
            <person name="Tanikawa M."/>
            <person name="Yamazaki M."/>
            <person name="Ninomiya K."/>
            <person name="Ishibashi T."/>
            <person name="Yamashita H."/>
            <person name="Murakawa K."/>
            <person name="Fujimori K."/>
            <person name="Tanai H."/>
            <person name="Kimata M."/>
            <person name="Watanabe M."/>
            <person name="Hiraoka S."/>
            <person name="Chiba Y."/>
            <person name="Ishida S."/>
            <person name="Ono Y."/>
            <person name="Takiguchi S."/>
            <person name="Watanabe S."/>
            <person name="Yosida M."/>
            <person name="Hotuta T."/>
            <person name="Kusano J."/>
            <person name="Kanehori K."/>
            <person name="Takahashi-Fujii A."/>
            <person name="Hara H."/>
            <person name="Tanase T.-O."/>
            <person name="Nomura Y."/>
            <person name="Togiya S."/>
            <person name="Komai F."/>
            <person name="Hara R."/>
            <person name="Takeuchi K."/>
            <person name="Arita M."/>
            <person name="Imose N."/>
            <person name="Musashino K."/>
            <person name="Yuuki H."/>
            <person name="Oshima A."/>
            <person name="Sasaki N."/>
            <person name="Aotsuka S."/>
            <person name="Yoshikawa Y."/>
            <person name="Matsunawa H."/>
            <person name="Ichihara T."/>
            <person name="Shiohata N."/>
            <person name="Sano S."/>
            <person name="Moriya S."/>
            <person name="Momiyama H."/>
            <person name="Satoh N."/>
            <person name="Takami S."/>
            <person name="Terashima Y."/>
            <person name="Suzuki O."/>
            <person name="Nakagawa S."/>
            <person name="Senoh A."/>
            <person name="Mizoguchi H."/>
            <person name="Goto Y."/>
            <person name="Shimizu F."/>
            <person name="Wakebe H."/>
            <person name="Hishigaki H."/>
            <person name="Watanabe T."/>
            <person name="Sugiyama A."/>
            <person name="Takemoto M."/>
            <person name="Kawakami B."/>
            <person name="Yamazaki M."/>
            <person name="Watanabe K."/>
            <person name="Kumagai A."/>
            <person name="Itakura S."/>
            <person name="Fukuzumi Y."/>
            <person name="Fujimori Y."/>
            <person name="Komiyama M."/>
            <person name="Tashiro H."/>
            <person name="Tanigami A."/>
            <person name="Fujiwara T."/>
            <person name="Ono T."/>
            <person name="Yamada K."/>
            <person name="Fujii Y."/>
            <person name="Ozaki K."/>
            <person name="Hirao M."/>
            <person name="Ohmori Y."/>
            <person name="Kawabata A."/>
            <person name="Hikiji T."/>
            <person name="Kobatake N."/>
            <person name="Inagaki H."/>
            <person name="Ikema Y."/>
            <person name="Okamoto S."/>
            <person name="Okitani R."/>
            <person name="Kawakami T."/>
            <person name="Noguchi S."/>
            <person name="Itoh T."/>
            <person name="Shigeta K."/>
            <person name="Senba T."/>
            <person name="Matsumura K."/>
            <person name="Nakajima Y."/>
            <person name="Mizuno T."/>
            <person name="Morinaga M."/>
            <person name="Sasaki M."/>
            <person name="Togashi T."/>
            <person name="Oyama M."/>
            <person name="Hata H."/>
            <person name="Watanabe M."/>
            <person name="Komatsu T."/>
            <person name="Mizushima-Sugano J."/>
            <person name="Satoh T."/>
            <person name="Shirai Y."/>
            <person name="Takahashi Y."/>
            <person name="Nakagawa K."/>
            <person name="Okumura K."/>
            <person name="Nagase T."/>
            <person name="Nomura N."/>
            <person name="Kikuchi H."/>
            <person name="Masuho Y."/>
            <person name="Yamashita R."/>
            <person name="Nakai K."/>
            <person name="Yada T."/>
            <person name="Nakamura Y."/>
            <person name="Ohara O."/>
            <person name="Isogai T."/>
            <person name="Sugano S."/>
        </authorList>
    </citation>
    <scope>NUCLEOTIDE SEQUENCE [LARGE SCALE MRNA] (ISOFORM 1)</scope>
    <scope>VARIANT ASP-30</scope>
    <source>
        <tissue>Amygdala</tissue>
        <tissue>Thymus</tissue>
    </source>
</reference>
<reference key="5">
    <citation type="journal article" date="2006" name="Nature">
        <title>DNA sequence of human chromosome 17 and analysis of rearrangement in the human lineage.</title>
        <authorList>
            <person name="Zody M.C."/>
            <person name="Garber M."/>
            <person name="Adams D.J."/>
            <person name="Sharpe T."/>
            <person name="Harrow J."/>
            <person name="Lupski J.R."/>
            <person name="Nicholson C."/>
            <person name="Searle S.M."/>
            <person name="Wilming L."/>
            <person name="Young S.K."/>
            <person name="Abouelleil A."/>
            <person name="Allen N.R."/>
            <person name="Bi W."/>
            <person name="Bloom T."/>
            <person name="Borowsky M.L."/>
            <person name="Bugalter B.E."/>
            <person name="Butler J."/>
            <person name="Chang J.L."/>
            <person name="Chen C.-K."/>
            <person name="Cook A."/>
            <person name="Corum B."/>
            <person name="Cuomo C.A."/>
            <person name="de Jong P.J."/>
            <person name="DeCaprio D."/>
            <person name="Dewar K."/>
            <person name="FitzGerald M."/>
            <person name="Gilbert J."/>
            <person name="Gibson R."/>
            <person name="Gnerre S."/>
            <person name="Goldstein S."/>
            <person name="Grafham D.V."/>
            <person name="Grocock R."/>
            <person name="Hafez N."/>
            <person name="Hagopian D.S."/>
            <person name="Hart E."/>
            <person name="Norman C.H."/>
            <person name="Humphray S."/>
            <person name="Jaffe D.B."/>
            <person name="Jones M."/>
            <person name="Kamal M."/>
            <person name="Khodiyar V.K."/>
            <person name="LaButti K."/>
            <person name="Laird G."/>
            <person name="Lehoczky J."/>
            <person name="Liu X."/>
            <person name="Lokyitsang T."/>
            <person name="Loveland J."/>
            <person name="Lui A."/>
            <person name="Macdonald P."/>
            <person name="Major J.E."/>
            <person name="Matthews L."/>
            <person name="Mauceli E."/>
            <person name="McCarroll S.A."/>
            <person name="Mihalev A.H."/>
            <person name="Mudge J."/>
            <person name="Nguyen C."/>
            <person name="Nicol R."/>
            <person name="O'Leary S.B."/>
            <person name="Osoegawa K."/>
            <person name="Schwartz D.C."/>
            <person name="Shaw-Smith C."/>
            <person name="Stankiewicz P."/>
            <person name="Steward C."/>
            <person name="Swarbreck D."/>
            <person name="Venkataraman V."/>
            <person name="Whittaker C.A."/>
            <person name="Yang X."/>
            <person name="Zimmer A.R."/>
            <person name="Bradley A."/>
            <person name="Hubbard T."/>
            <person name="Birren B.W."/>
            <person name="Rogers J."/>
            <person name="Lander E.S."/>
            <person name="Nusbaum C."/>
        </authorList>
    </citation>
    <scope>NUCLEOTIDE SEQUENCE [LARGE SCALE GENOMIC DNA]</scope>
    <scope>VARIANT ASP-30</scope>
</reference>
<reference key="6">
    <citation type="submission" date="2005-07" db="EMBL/GenBank/DDBJ databases">
        <authorList>
            <person name="Mural R.J."/>
            <person name="Istrail S."/>
            <person name="Sutton G.G."/>
            <person name="Florea L."/>
            <person name="Halpern A.L."/>
            <person name="Mobarry C.M."/>
            <person name="Lippert R."/>
            <person name="Walenz B."/>
            <person name="Shatkay H."/>
            <person name="Dew I."/>
            <person name="Miller J.R."/>
            <person name="Flanigan M.J."/>
            <person name="Edwards N.J."/>
            <person name="Bolanos R."/>
            <person name="Fasulo D."/>
            <person name="Halldorsson B.V."/>
            <person name="Hannenhalli S."/>
            <person name="Turner R."/>
            <person name="Yooseph S."/>
            <person name="Lu F."/>
            <person name="Nusskern D.R."/>
            <person name="Shue B.C."/>
            <person name="Zheng X.H."/>
            <person name="Zhong F."/>
            <person name="Delcher A.L."/>
            <person name="Huson D.H."/>
            <person name="Kravitz S.A."/>
            <person name="Mouchard L."/>
            <person name="Reinert K."/>
            <person name="Remington K.A."/>
            <person name="Clark A.G."/>
            <person name="Waterman M.S."/>
            <person name="Eichler E.E."/>
            <person name="Adams M.D."/>
            <person name="Hunkapiller M.W."/>
            <person name="Myers E.W."/>
            <person name="Venter J.C."/>
        </authorList>
    </citation>
    <scope>NUCLEOTIDE SEQUENCE [LARGE SCALE GENOMIC DNA]</scope>
</reference>
<reference key="7">
    <citation type="journal article" date="2004" name="Genome Res.">
        <title>The status, quality, and expansion of the NIH full-length cDNA project: the Mammalian Gene Collection (MGC).</title>
        <authorList>
            <consortium name="The MGC Project Team"/>
        </authorList>
    </citation>
    <scope>NUCLEOTIDE SEQUENCE [LARGE SCALE MRNA] (ISOFORM 1)</scope>
    <scope>VARIANT ASP-30</scope>
    <source>
        <tissue>Bone marrow</tissue>
        <tissue>Lung</tissue>
    </source>
</reference>
<reference key="8">
    <citation type="journal article" date="2006" name="Fertil. Steril.">
        <title>Identification of ten novel genes involved in human spermatogenesis by microarray analysis of testicular tissue.</title>
        <authorList>
            <person name="Lin Y.H."/>
            <person name="Lin Y.M."/>
            <person name="Teng Y.N."/>
            <person name="Hsieh T.Y."/>
            <person name="Lin Y.S."/>
            <person name="Kuo P.L."/>
        </authorList>
    </citation>
    <scope>TISSUE SPECIFICITY</scope>
</reference>
<dbReference type="EC" id="3.4.-.-" evidence="1"/>
<dbReference type="EMBL" id="AJ635358">
    <property type="protein sequence ID" value="CAG25750.1"/>
    <property type="molecule type" value="mRNA"/>
</dbReference>
<dbReference type="EMBL" id="AF208856">
    <property type="protein sequence ID" value="AAF64270.1"/>
    <property type="status" value="ALT_SEQ"/>
    <property type="molecule type" value="mRNA"/>
</dbReference>
<dbReference type="EMBL" id="AK126146">
    <property type="protein sequence ID" value="BAC86462.1"/>
    <property type="molecule type" value="mRNA"/>
</dbReference>
<dbReference type="EMBL" id="AK090981">
    <property type="protein sequence ID" value="BAG52256.1"/>
    <property type="molecule type" value="mRNA"/>
</dbReference>
<dbReference type="EMBL" id="AC005332">
    <property type="status" value="NOT_ANNOTATED_CDS"/>
    <property type="molecule type" value="Genomic_DNA"/>
</dbReference>
<dbReference type="EMBL" id="CH471099">
    <property type="protein sequence ID" value="EAW89050.1"/>
    <property type="molecule type" value="Genomic_DNA"/>
</dbReference>
<dbReference type="EMBL" id="BC050709">
    <property type="protein sequence ID" value="AAH50709.1"/>
    <property type="molecule type" value="mRNA"/>
</dbReference>
<dbReference type="EMBL" id="BC056271">
    <property type="protein sequence ID" value="AAH56271.1"/>
    <property type="molecule type" value="mRNA"/>
</dbReference>
<dbReference type="CCDS" id="CCDS11674.1">
    <molecule id="Q86W34-4"/>
</dbReference>
<dbReference type="CCDS" id="CCDS32714.1">
    <molecule id="Q86W34-5"/>
</dbReference>
<dbReference type="RefSeq" id="NP_001028741.1">
    <molecule id="Q86W34-4"/>
    <property type="nucleotide sequence ID" value="NM_001033569.2"/>
</dbReference>
<dbReference type="RefSeq" id="NP_001028742.1">
    <molecule id="Q86W34-4"/>
    <property type="nucleotide sequence ID" value="NM_001033570.2"/>
</dbReference>
<dbReference type="RefSeq" id="NP_001028743.1">
    <molecule id="Q86W34-4"/>
    <property type="nucleotide sequence ID" value="NM_001033571.1"/>
</dbReference>
<dbReference type="RefSeq" id="NP_001028744.1">
    <molecule id="Q86W34-4"/>
    <property type="nucleotide sequence ID" value="NM_001033572.1"/>
</dbReference>
<dbReference type="RefSeq" id="NP_001028746.1">
    <molecule id="Q86W34-5"/>
    <property type="nucleotide sequence ID" value="NM_001033574.2"/>
</dbReference>
<dbReference type="RefSeq" id="NP_001275983.1">
    <molecule id="Q86W34-4"/>
    <property type="nucleotide sequence ID" value="NM_001289054.2"/>
</dbReference>
<dbReference type="RefSeq" id="NP_001275985.1">
    <molecule id="Q86W34-4"/>
    <property type="nucleotide sequence ID" value="NM_001289056.2"/>
</dbReference>
<dbReference type="RefSeq" id="NP_001333400.1">
    <molecule id="Q86W34-4"/>
    <property type="nucleotide sequence ID" value="NM_001346471.1"/>
</dbReference>
<dbReference type="RefSeq" id="NP_001333401.1">
    <molecule id="Q86W34-4"/>
    <property type="nucleotide sequence ID" value="NM_001346472.1"/>
</dbReference>
<dbReference type="RefSeq" id="NP_001333402.1">
    <molecule id="Q86W34-4"/>
    <property type="nucleotide sequence ID" value="NM_001346473.1"/>
</dbReference>
<dbReference type="RefSeq" id="NP_001333403.1">
    <molecule id="Q86W34-4"/>
    <property type="nucleotide sequence ID" value="NM_001346474.2"/>
</dbReference>
<dbReference type="RefSeq" id="NP_001333404.1">
    <molecule id="Q86W34-4"/>
    <property type="nucleotide sequence ID" value="NM_001346475.2"/>
</dbReference>
<dbReference type="RefSeq" id="NP_001333405.1">
    <molecule id="Q86W34-4"/>
    <property type="nucleotide sequence ID" value="NM_001346476.2"/>
</dbReference>
<dbReference type="RefSeq" id="NP_001333406.1">
    <molecule id="Q86W34-4"/>
    <property type="nucleotide sequence ID" value="NM_001346477.2"/>
</dbReference>
<dbReference type="RefSeq" id="NP_001333407.1">
    <molecule id="Q86W34-4"/>
    <property type="nucleotide sequence ID" value="NM_001346478.2"/>
</dbReference>
<dbReference type="RefSeq" id="NP_001333408.1">
    <molecule id="Q86W34-4"/>
    <property type="nucleotide sequence ID" value="NM_001346479.2"/>
</dbReference>
<dbReference type="RefSeq" id="NP_001333409.1">
    <molecule id="Q86W34-5"/>
    <property type="nucleotide sequence ID" value="NM_001346480.1"/>
</dbReference>
<dbReference type="RefSeq" id="NP_057711.3">
    <molecule id="Q86W34-4"/>
    <property type="nucleotide sequence ID" value="NM_016627.4"/>
</dbReference>
<dbReference type="RefSeq" id="XP_024306554.1">
    <molecule id="Q86W34-4"/>
    <property type="nucleotide sequence ID" value="XM_024450786.2"/>
</dbReference>
<dbReference type="RefSeq" id="XP_024306555.1">
    <molecule id="Q86W34-4"/>
    <property type="nucleotide sequence ID" value="XM_024450787.2"/>
</dbReference>
<dbReference type="RefSeq" id="XP_024306556.1">
    <molecule id="Q86W34-4"/>
    <property type="nucleotide sequence ID" value="XM_024450788.2"/>
</dbReference>
<dbReference type="RefSeq" id="XP_047292166.1">
    <molecule id="Q86W34-4"/>
    <property type="nucleotide sequence ID" value="XM_047436210.1"/>
</dbReference>
<dbReference type="SMR" id="Q86W34"/>
<dbReference type="BioGRID" id="119472">
    <property type="interactions" value="42"/>
</dbReference>
<dbReference type="FunCoup" id="Q86W34">
    <property type="interactions" value="267"/>
</dbReference>
<dbReference type="IntAct" id="Q86W34">
    <property type="interactions" value="17"/>
</dbReference>
<dbReference type="STRING" id="9606.ENSP00000464635"/>
<dbReference type="MEROPS" id="M54.002"/>
<dbReference type="GlyGen" id="Q86W34">
    <property type="glycosylation" value="1 site"/>
</dbReference>
<dbReference type="iPTMnet" id="Q86W34"/>
<dbReference type="PhosphoSitePlus" id="Q86W34"/>
<dbReference type="BioMuta" id="AMZ2"/>
<dbReference type="DMDM" id="317373321"/>
<dbReference type="jPOST" id="Q86W34"/>
<dbReference type="MassIVE" id="Q86W34"/>
<dbReference type="PaxDb" id="9606-ENSP00000352976"/>
<dbReference type="PeptideAtlas" id="Q86W34"/>
<dbReference type="ProteomicsDB" id="1468"/>
<dbReference type="ProteomicsDB" id="70111">
    <molecule id="Q86W34-4"/>
</dbReference>
<dbReference type="Pumba" id="Q86W34"/>
<dbReference type="Antibodypedia" id="19248">
    <property type="antibodies" value="73 antibodies from 20 providers"/>
</dbReference>
<dbReference type="DNASU" id="51321"/>
<dbReference type="Ensembl" id="ENST00000359783.8">
    <molecule id="Q86W34-5"/>
    <property type="protein sequence ID" value="ENSP00000352831.4"/>
    <property type="gene ID" value="ENSG00000196704.14"/>
</dbReference>
<dbReference type="Ensembl" id="ENST00000359904.8">
    <molecule id="Q86W34-4"/>
    <property type="protein sequence ID" value="ENSP00000352976.3"/>
    <property type="gene ID" value="ENSG00000196704.14"/>
</dbReference>
<dbReference type="Ensembl" id="ENST00000392720.6">
    <molecule id="Q86W34-4"/>
    <property type="protein sequence ID" value="ENSP00000376481.2"/>
    <property type="gene ID" value="ENSG00000196704.14"/>
</dbReference>
<dbReference type="Ensembl" id="ENST00000577866.5">
    <molecule id="Q86W34-4"/>
    <property type="protein sequence ID" value="ENSP00000464133.1"/>
    <property type="gene ID" value="ENSG00000196704.14"/>
</dbReference>
<dbReference type="Ensembl" id="ENST00000577985.5">
    <molecule id="Q86W34-4"/>
    <property type="protein sequence ID" value="ENSP00000464635.1"/>
    <property type="gene ID" value="ENSG00000196704.14"/>
</dbReference>
<dbReference type="Ensembl" id="ENST00000580753.5">
    <molecule id="Q86W34-4"/>
    <property type="protein sequence ID" value="ENSP00000463012.1"/>
    <property type="gene ID" value="ENSG00000196704.14"/>
</dbReference>
<dbReference type="Ensembl" id="ENST00000612294.4">
    <molecule id="Q86W34-4"/>
    <property type="protein sequence ID" value="ENSP00000483162.1"/>
    <property type="gene ID" value="ENSG00000196704.14"/>
</dbReference>
<dbReference type="Ensembl" id="ENST00000674770.2">
    <molecule id="Q86W34-4"/>
    <property type="protein sequence ID" value="ENSP00000501934.1"/>
    <property type="gene ID" value="ENSG00000196704.14"/>
</dbReference>
<dbReference type="GeneID" id="51321"/>
<dbReference type="KEGG" id="hsa:51321"/>
<dbReference type="MANE-Select" id="ENST00000359904.8">
    <property type="protein sequence ID" value="ENSP00000352976.3"/>
    <property type="RefSeq nucleotide sequence ID" value="NM_016627.5"/>
    <property type="RefSeq protein sequence ID" value="NP_057711.3"/>
</dbReference>
<dbReference type="UCSC" id="uc002jgs.2">
    <molecule id="Q86W34-4"/>
    <property type="organism name" value="human"/>
</dbReference>
<dbReference type="AGR" id="HGNC:28041"/>
<dbReference type="CTD" id="51321"/>
<dbReference type="DisGeNET" id="51321"/>
<dbReference type="GeneCards" id="AMZ2"/>
<dbReference type="HGNC" id="HGNC:28041">
    <property type="gene designation" value="AMZ2"/>
</dbReference>
<dbReference type="HPA" id="ENSG00000196704">
    <property type="expression patterns" value="Low tissue specificity"/>
</dbReference>
<dbReference type="MIM" id="615169">
    <property type="type" value="gene"/>
</dbReference>
<dbReference type="neXtProt" id="NX_Q86W34"/>
<dbReference type="OpenTargets" id="ENSG00000196704"/>
<dbReference type="PharmGKB" id="PA162376414"/>
<dbReference type="VEuPathDB" id="HostDB:ENSG00000196704"/>
<dbReference type="eggNOG" id="ENOG502QVTZ">
    <property type="taxonomic scope" value="Eukaryota"/>
</dbReference>
<dbReference type="GeneTree" id="ENSGT00530000063996"/>
<dbReference type="HOGENOM" id="CLU_029710_2_1_1"/>
<dbReference type="InParanoid" id="Q86W34"/>
<dbReference type="OMA" id="CQWLSCV"/>
<dbReference type="OrthoDB" id="2365600at2759"/>
<dbReference type="PAN-GO" id="Q86W34">
    <property type="GO annotations" value="0 GO annotations based on evolutionary models"/>
</dbReference>
<dbReference type="PhylomeDB" id="Q86W34"/>
<dbReference type="TreeFam" id="TF328603"/>
<dbReference type="PathwayCommons" id="Q86W34"/>
<dbReference type="SignaLink" id="Q86W34"/>
<dbReference type="BioGRID-ORCS" id="51321">
    <property type="hits" value="11 hits in 1150 CRISPR screens"/>
</dbReference>
<dbReference type="ChiTaRS" id="AMZ2">
    <property type="organism name" value="human"/>
</dbReference>
<dbReference type="GenomeRNAi" id="51321"/>
<dbReference type="Pharos" id="Q86W34">
    <property type="development level" value="Tbio"/>
</dbReference>
<dbReference type="PRO" id="PR:Q86W34"/>
<dbReference type="Proteomes" id="UP000005640">
    <property type="component" value="Chromosome 17"/>
</dbReference>
<dbReference type="RNAct" id="Q86W34">
    <property type="molecule type" value="protein"/>
</dbReference>
<dbReference type="Bgee" id="ENSG00000196704">
    <property type="expression patterns" value="Expressed in sperm and 202 other cell types or tissues"/>
</dbReference>
<dbReference type="ExpressionAtlas" id="Q86W34">
    <property type="expression patterns" value="baseline and differential"/>
</dbReference>
<dbReference type="GO" id="GO:0046872">
    <property type="term" value="F:metal ion binding"/>
    <property type="evidence" value="ECO:0007669"/>
    <property type="project" value="UniProtKB-KW"/>
</dbReference>
<dbReference type="GO" id="GO:0008237">
    <property type="term" value="F:metallopeptidase activity"/>
    <property type="evidence" value="ECO:0007669"/>
    <property type="project" value="UniProtKB-KW"/>
</dbReference>
<dbReference type="GO" id="GO:0006508">
    <property type="term" value="P:proteolysis"/>
    <property type="evidence" value="ECO:0007669"/>
    <property type="project" value="UniProtKB-KW"/>
</dbReference>
<dbReference type="CDD" id="cd11375">
    <property type="entry name" value="Peptidase_M54"/>
    <property type="match status" value="1"/>
</dbReference>
<dbReference type="Gene3D" id="3.40.390.10">
    <property type="entry name" value="Collagenase (Catalytic Domain)"/>
    <property type="match status" value="1"/>
</dbReference>
<dbReference type="InterPro" id="IPR052009">
    <property type="entry name" value="Archaemetzincin"/>
</dbReference>
<dbReference type="InterPro" id="IPR024079">
    <property type="entry name" value="MetalloPept_cat_dom_sf"/>
</dbReference>
<dbReference type="InterPro" id="IPR012962">
    <property type="entry name" value="Pept_M54_archaemetzincn"/>
</dbReference>
<dbReference type="PANTHER" id="PTHR32205:SF5">
    <property type="entry name" value="ARCHAEMETZINCIN-2"/>
    <property type="match status" value="1"/>
</dbReference>
<dbReference type="PANTHER" id="PTHR32205">
    <property type="entry name" value="ARCHAEMETZINCIN-2-RELATED"/>
    <property type="match status" value="1"/>
</dbReference>
<dbReference type="Pfam" id="PF07998">
    <property type="entry name" value="Peptidase_M54"/>
    <property type="match status" value="1"/>
</dbReference>
<dbReference type="SUPFAM" id="SSF55486">
    <property type="entry name" value="Metalloproteases ('zincins'), catalytic domain"/>
    <property type="match status" value="1"/>
</dbReference>
<dbReference type="PROSITE" id="PS00142">
    <property type="entry name" value="ZINC_PROTEASE"/>
    <property type="match status" value="1"/>
</dbReference>